<protein>
    <recommendedName>
        <fullName evidence="1">Trigger factor</fullName>
        <shortName evidence="1">TF</shortName>
        <ecNumber evidence="1">5.2.1.8</ecNumber>
    </recommendedName>
    <alternativeName>
        <fullName evidence="1">PPIase</fullName>
    </alternativeName>
</protein>
<evidence type="ECO:0000255" key="1">
    <source>
        <dbReference type="HAMAP-Rule" id="MF_00303"/>
    </source>
</evidence>
<evidence type="ECO:0000256" key="2">
    <source>
        <dbReference type="SAM" id="MobiDB-lite"/>
    </source>
</evidence>
<dbReference type="EC" id="5.2.1.8" evidence="1"/>
<dbReference type="EMBL" id="CP001634">
    <property type="protein sequence ID" value="ACR80619.1"/>
    <property type="molecule type" value="Genomic_DNA"/>
</dbReference>
<dbReference type="RefSeq" id="WP_015869262.1">
    <property type="nucleotide sequence ID" value="NC_012785.1"/>
</dbReference>
<dbReference type="SMR" id="C5CGV0"/>
<dbReference type="STRING" id="521045.Kole_1938"/>
<dbReference type="KEGG" id="kol:Kole_1938"/>
<dbReference type="eggNOG" id="COG0544">
    <property type="taxonomic scope" value="Bacteria"/>
</dbReference>
<dbReference type="HOGENOM" id="CLU_033058_3_1_0"/>
<dbReference type="OrthoDB" id="9767721at2"/>
<dbReference type="Proteomes" id="UP000002382">
    <property type="component" value="Chromosome"/>
</dbReference>
<dbReference type="GO" id="GO:0005737">
    <property type="term" value="C:cytoplasm"/>
    <property type="evidence" value="ECO:0007669"/>
    <property type="project" value="UniProtKB-SubCell"/>
</dbReference>
<dbReference type="GO" id="GO:0003677">
    <property type="term" value="F:DNA binding"/>
    <property type="evidence" value="ECO:0007669"/>
    <property type="project" value="InterPro"/>
</dbReference>
<dbReference type="GO" id="GO:0003755">
    <property type="term" value="F:peptidyl-prolyl cis-trans isomerase activity"/>
    <property type="evidence" value="ECO:0007669"/>
    <property type="project" value="UniProtKB-UniRule"/>
</dbReference>
<dbReference type="GO" id="GO:0051301">
    <property type="term" value="P:cell division"/>
    <property type="evidence" value="ECO:0007669"/>
    <property type="project" value="UniProtKB-KW"/>
</dbReference>
<dbReference type="GO" id="GO:0006457">
    <property type="term" value="P:protein folding"/>
    <property type="evidence" value="ECO:0007669"/>
    <property type="project" value="UniProtKB-UniRule"/>
</dbReference>
<dbReference type="GO" id="GO:0015031">
    <property type="term" value="P:protein transport"/>
    <property type="evidence" value="ECO:0007669"/>
    <property type="project" value="UniProtKB-UniRule"/>
</dbReference>
<dbReference type="GO" id="GO:0032784">
    <property type="term" value="P:regulation of DNA-templated transcription elongation"/>
    <property type="evidence" value="ECO:0007669"/>
    <property type="project" value="InterPro"/>
</dbReference>
<dbReference type="Gene3D" id="3.10.50.30">
    <property type="entry name" value="Transcription elongation factor, GreA/GreB, C-terminal domain"/>
    <property type="match status" value="1"/>
</dbReference>
<dbReference type="Gene3D" id="3.30.70.1050">
    <property type="entry name" value="Trigger factor ribosome-binding domain"/>
    <property type="match status" value="1"/>
</dbReference>
<dbReference type="Gene3D" id="1.10.3120.10">
    <property type="entry name" value="Trigger factor, C-terminal domain"/>
    <property type="match status" value="1"/>
</dbReference>
<dbReference type="HAMAP" id="MF_00303">
    <property type="entry name" value="Trigger_factor_Tig"/>
    <property type="match status" value="1"/>
</dbReference>
<dbReference type="InterPro" id="IPR036953">
    <property type="entry name" value="GreA/GreB_C_sf"/>
</dbReference>
<dbReference type="InterPro" id="IPR005215">
    <property type="entry name" value="Trig_fac"/>
</dbReference>
<dbReference type="InterPro" id="IPR008880">
    <property type="entry name" value="Trigger_fac_C"/>
</dbReference>
<dbReference type="InterPro" id="IPR037041">
    <property type="entry name" value="Trigger_fac_C_sf"/>
</dbReference>
<dbReference type="InterPro" id="IPR008881">
    <property type="entry name" value="Trigger_fac_ribosome-bd_bac"/>
</dbReference>
<dbReference type="InterPro" id="IPR036611">
    <property type="entry name" value="Trigger_fac_ribosome-bd_sf"/>
</dbReference>
<dbReference type="InterPro" id="IPR027304">
    <property type="entry name" value="Trigger_fact/SurA_dom_sf"/>
</dbReference>
<dbReference type="NCBIfam" id="TIGR00115">
    <property type="entry name" value="tig"/>
    <property type="match status" value="1"/>
</dbReference>
<dbReference type="Pfam" id="PF05698">
    <property type="entry name" value="Trigger_C"/>
    <property type="match status" value="1"/>
</dbReference>
<dbReference type="Pfam" id="PF05697">
    <property type="entry name" value="Trigger_N"/>
    <property type="match status" value="1"/>
</dbReference>
<dbReference type="PIRSF" id="PIRSF003095">
    <property type="entry name" value="Trigger_factor"/>
    <property type="match status" value="1"/>
</dbReference>
<dbReference type="SUPFAM" id="SSF54534">
    <property type="entry name" value="FKBP-like"/>
    <property type="match status" value="1"/>
</dbReference>
<dbReference type="SUPFAM" id="SSF109998">
    <property type="entry name" value="Triger factor/SurA peptide-binding domain-like"/>
    <property type="match status" value="1"/>
</dbReference>
<dbReference type="SUPFAM" id="SSF102735">
    <property type="entry name" value="Trigger factor ribosome-binding domain"/>
    <property type="match status" value="1"/>
</dbReference>
<gene>
    <name evidence="1" type="primary">tig</name>
    <name type="ordered locus">Kole_1938</name>
</gene>
<sequence length="439" mass="50877">MEKNVVKAEKNVEIVEFTFGPDEIAEAENEIVRYVNKNYTIPGFRKGKAPKRIIETFFGENFRDMVLEELSRKIEDTLKDEELFIPAVIADRKIEGDVAVFVVELHREPKVELKDYTGLELSVPKQEEVLANYVDNKLEELRNEAAIVEPKDGPAEIGDVINIEYTIEKDGKIIADHKTQEILIVEDDDRPIVTNVIGKKKGDIVEFDRTFENSNNKYHYKIEIKEVLKRTLMELNDEFAKSVASEVNTLEELKKKLEEEGLEAFESWKKDFLRQQVQDKLAELVELEISEKTLDYFVNRAIENAKKENTYDSYLKQAGSEEKLYEEFKTGILNELKKNTAIEKIAEKEQIEVTDEEVMKTAEELSTYWGISPERAKEIVKTREDIRNDIVENIRRTKVQDLIVEKATIKEISADEPVEEQKEEEEKEEAGSENSENKE</sequence>
<reference key="1">
    <citation type="submission" date="2009-06" db="EMBL/GenBank/DDBJ databases">
        <title>Complete sequence of Thermotogales bacterium TBF 19.5.1.</title>
        <authorList>
            <consortium name="US DOE Joint Genome Institute"/>
            <person name="Lucas S."/>
            <person name="Copeland A."/>
            <person name="Lapidus A."/>
            <person name="Glavina del Rio T."/>
            <person name="Tice H."/>
            <person name="Bruce D."/>
            <person name="Goodwin L."/>
            <person name="Pitluck S."/>
            <person name="Chertkov O."/>
            <person name="Brettin T."/>
            <person name="Detter J.C."/>
            <person name="Han C."/>
            <person name="Schmutz J."/>
            <person name="Larimer F."/>
            <person name="Land M."/>
            <person name="Hauser L."/>
            <person name="Kyrpides N."/>
            <person name="Ovchinnikova G."/>
            <person name="Noll K."/>
        </authorList>
    </citation>
    <scope>NUCLEOTIDE SEQUENCE [LARGE SCALE GENOMIC DNA]</scope>
    <source>
        <strain>ATCC BAA-1733 / DSM 21960 / TBF 19.5.1</strain>
    </source>
</reference>
<proteinExistence type="inferred from homology"/>
<feature type="chain" id="PRO_1000204993" description="Trigger factor">
    <location>
        <begin position="1"/>
        <end position="439"/>
    </location>
</feature>
<feature type="domain" description="PPIase FKBP-type" evidence="1">
    <location>
        <begin position="158"/>
        <end position="233"/>
    </location>
</feature>
<feature type="region of interest" description="Disordered" evidence="2">
    <location>
        <begin position="410"/>
        <end position="439"/>
    </location>
</feature>
<feature type="compositionally biased region" description="Acidic residues" evidence="2">
    <location>
        <begin position="414"/>
        <end position="428"/>
    </location>
</feature>
<organism>
    <name type="scientific">Kosmotoga olearia (strain ATCC BAA-1733 / DSM 21960 / TBF 19.5.1)</name>
    <dbReference type="NCBI Taxonomy" id="521045"/>
    <lineage>
        <taxon>Bacteria</taxon>
        <taxon>Thermotogati</taxon>
        <taxon>Thermotogota</taxon>
        <taxon>Thermotogae</taxon>
        <taxon>Kosmotogales</taxon>
        <taxon>Kosmotogaceae</taxon>
        <taxon>Kosmotoga</taxon>
    </lineage>
</organism>
<keyword id="KW-0131">Cell cycle</keyword>
<keyword id="KW-0132">Cell division</keyword>
<keyword id="KW-0143">Chaperone</keyword>
<keyword id="KW-0963">Cytoplasm</keyword>
<keyword id="KW-0413">Isomerase</keyword>
<keyword id="KW-1185">Reference proteome</keyword>
<keyword id="KW-0697">Rotamase</keyword>
<comment type="function">
    <text evidence="1">Involved in protein export. Acts as a chaperone by maintaining the newly synthesized protein in an open conformation. Functions as a peptidyl-prolyl cis-trans isomerase.</text>
</comment>
<comment type="catalytic activity">
    <reaction evidence="1">
        <text>[protein]-peptidylproline (omega=180) = [protein]-peptidylproline (omega=0)</text>
        <dbReference type="Rhea" id="RHEA:16237"/>
        <dbReference type="Rhea" id="RHEA-COMP:10747"/>
        <dbReference type="Rhea" id="RHEA-COMP:10748"/>
        <dbReference type="ChEBI" id="CHEBI:83833"/>
        <dbReference type="ChEBI" id="CHEBI:83834"/>
        <dbReference type="EC" id="5.2.1.8"/>
    </reaction>
</comment>
<comment type="subcellular location">
    <subcellularLocation>
        <location>Cytoplasm</location>
    </subcellularLocation>
    <text evidence="1">About half TF is bound to the ribosome near the polypeptide exit tunnel while the other half is free in the cytoplasm.</text>
</comment>
<comment type="domain">
    <text evidence="1">Consists of 3 domains; the N-terminus binds the ribosome, the middle domain has PPIase activity, while the C-terminus has intrinsic chaperone activity on its own.</text>
</comment>
<comment type="similarity">
    <text evidence="1">Belongs to the FKBP-type PPIase family. Tig subfamily.</text>
</comment>
<accession>C5CGV0</accession>
<name>TIG_KOSOT</name>